<comment type="function">
    <text evidence="2">May have an important role in maintaining nuclear envelope structure by organizing protein complexes at the inner nuclear membrane. Required for retaining emerin at the inner nuclear membrane (By similarity). Plays a role in the modulation of innate immune signaling through the cGAS-STING pathway by interacting with RNF26 (By similarity). In addition, functions as a critical signaling component in mediating NF-kappa-B activation by acting downstream of EGFR and upstream of CARD10 (By similarity). Contributes to passive conductance current in cochlear glia-like supporting cells, mediated by gap junctions and necessary for hearing (By similarity).</text>
</comment>
<comment type="subunit">
    <text evidence="1 2">Can form oligomers through the transmembrane domains. Interacts with EMD; the interaction retains EMD at the inner nuclear membrane. Interacts with LMNA and LMNB2 (By similarity). Interacts with SUN2. Interacts with RNF26; this interaction is important to modulate innate immune signaling through the cGAS-STING pathway. Interacts with CARD10 (By similarity). Interacts with gap junctions proteins GJB2/Cx26 and GJB4/Cx30 (By similarity).</text>
</comment>
<comment type="subcellular location">
    <subcellularLocation>
        <location evidence="2">Endoplasmic reticulum membrane</location>
    </subcellularLocation>
    <subcellularLocation>
        <location evidence="2">Nucleus inner membrane</location>
        <topology evidence="2">Multi-pass membrane protein</topology>
    </subcellularLocation>
    <subcellularLocation>
        <location evidence="2">Cell membrane</location>
    </subcellularLocation>
    <text evidence="1">Retained in the inner nuclear membrane through interaction with EMD and A- and B-lamins. The N- and C-termini are oriented towards the nucleoplasm. The majority of the hydrophilic domain resides in the endoplasmic reticulum lumen (By similarity).</text>
</comment>
<comment type="similarity">
    <text evidence="4">Belongs to the TMEM43 family.</text>
</comment>
<feature type="initiator methionine" description="Removed" evidence="2">
    <location>
        <position position="1"/>
    </location>
</feature>
<feature type="chain" id="PRO_0000284500" description="Transmembrane protein 43">
    <location>
        <begin position="2"/>
        <end position="400"/>
    </location>
</feature>
<feature type="topological domain" description="Nuclear" evidence="3">
    <location>
        <begin position="2"/>
        <end position="31"/>
    </location>
</feature>
<feature type="transmembrane region" description="Helical" evidence="3">
    <location>
        <begin position="32"/>
        <end position="52"/>
    </location>
</feature>
<feature type="topological domain" description="Perinuclear space" evidence="3">
    <location>
        <begin position="53"/>
        <end position="313"/>
    </location>
</feature>
<feature type="transmembrane region" description="Helical" evidence="3">
    <location>
        <begin position="314"/>
        <end position="334"/>
    </location>
</feature>
<feature type="topological domain" description="Nuclear" evidence="3">
    <location>
        <begin position="335"/>
        <end position="345"/>
    </location>
</feature>
<feature type="transmembrane region" description="Helical" evidence="3">
    <location>
        <begin position="346"/>
        <end position="366"/>
    </location>
</feature>
<feature type="topological domain" description="Perinuclear space" evidence="3">
    <location>
        <begin position="367"/>
        <end position="368"/>
    </location>
</feature>
<feature type="transmembrane region" description="Helical" evidence="3">
    <location>
        <begin position="369"/>
        <end position="389"/>
    </location>
</feature>
<feature type="topological domain" description="Nuclear" evidence="3">
    <location>
        <begin position="390"/>
        <end position="400"/>
    </location>
</feature>
<feature type="modified residue" description="N-acetylalanine" evidence="2">
    <location>
        <position position="2"/>
    </location>
</feature>
<reference key="1">
    <citation type="submission" date="2004-11" db="EMBL/GenBank/DDBJ databases">
        <authorList>
            <consortium name="The German cDNA consortium"/>
        </authorList>
    </citation>
    <scope>NUCLEOTIDE SEQUENCE [LARGE SCALE MRNA]</scope>
    <source>
        <tissue>Brain cortex</tissue>
        <tissue>Kidney</tissue>
    </source>
</reference>
<organism>
    <name type="scientific">Pongo abelii</name>
    <name type="common">Sumatran orangutan</name>
    <name type="synonym">Pongo pygmaeus abelii</name>
    <dbReference type="NCBI Taxonomy" id="9601"/>
    <lineage>
        <taxon>Eukaryota</taxon>
        <taxon>Metazoa</taxon>
        <taxon>Chordata</taxon>
        <taxon>Craniata</taxon>
        <taxon>Vertebrata</taxon>
        <taxon>Euteleostomi</taxon>
        <taxon>Mammalia</taxon>
        <taxon>Eutheria</taxon>
        <taxon>Euarchontoglires</taxon>
        <taxon>Primates</taxon>
        <taxon>Haplorrhini</taxon>
        <taxon>Catarrhini</taxon>
        <taxon>Hominidae</taxon>
        <taxon>Pongo</taxon>
    </lineage>
</organism>
<gene>
    <name type="primary">TMEM43</name>
</gene>
<proteinExistence type="evidence at transcript level"/>
<evidence type="ECO:0000250" key="1"/>
<evidence type="ECO:0000250" key="2">
    <source>
        <dbReference type="UniProtKB" id="Q9BTV4"/>
    </source>
</evidence>
<evidence type="ECO:0000255" key="3"/>
<evidence type="ECO:0000305" key="4"/>
<dbReference type="EMBL" id="CR859304">
    <property type="protein sequence ID" value="CAH91482.1"/>
    <property type="molecule type" value="mRNA"/>
</dbReference>
<dbReference type="EMBL" id="CR926103">
    <property type="protein sequence ID" value="CAI29729.1"/>
    <property type="molecule type" value="mRNA"/>
</dbReference>
<dbReference type="RefSeq" id="NP_001125873.1">
    <property type="nucleotide sequence ID" value="NM_001132401.1"/>
</dbReference>
<dbReference type="FunCoup" id="Q5R9S8">
    <property type="interactions" value="1150"/>
</dbReference>
<dbReference type="STRING" id="9601.ENSPPYP00000014987"/>
<dbReference type="Ensembl" id="ENSPPYT00000015587.3">
    <property type="protein sequence ID" value="ENSPPYP00000014987.2"/>
    <property type="gene ID" value="ENSPPYG00000013400.3"/>
</dbReference>
<dbReference type="GeneID" id="100172804"/>
<dbReference type="KEGG" id="pon:100172804"/>
<dbReference type="CTD" id="79188"/>
<dbReference type="eggNOG" id="ENOG502QSR2">
    <property type="taxonomic scope" value="Eukaryota"/>
</dbReference>
<dbReference type="GeneTree" id="ENSGT00390000009671"/>
<dbReference type="HOGENOM" id="CLU_042602_1_0_1"/>
<dbReference type="InParanoid" id="Q5R9S8"/>
<dbReference type="OMA" id="NMMALDE"/>
<dbReference type="OrthoDB" id="410725at2759"/>
<dbReference type="TreeFam" id="TF324718"/>
<dbReference type="Proteomes" id="UP000001595">
    <property type="component" value="Chromosome 3"/>
</dbReference>
<dbReference type="GO" id="GO:0005788">
    <property type="term" value="C:endoplasmic reticulum lumen"/>
    <property type="evidence" value="ECO:0007669"/>
    <property type="project" value="Ensembl"/>
</dbReference>
<dbReference type="GO" id="GO:0005789">
    <property type="term" value="C:endoplasmic reticulum membrane"/>
    <property type="evidence" value="ECO:0007669"/>
    <property type="project" value="UniProtKB-SubCell"/>
</dbReference>
<dbReference type="GO" id="GO:0005794">
    <property type="term" value="C:Golgi apparatus"/>
    <property type="evidence" value="ECO:0007669"/>
    <property type="project" value="Ensembl"/>
</dbReference>
<dbReference type="GO" id="GO:0005637">
    <property type="term" value="C:nuclear inner membrane"/>
    <property type="evidence" value="ECO:0007669"/>
    <property type="project" value="UniProtKB-SubCell"/>
</dbReference>
<dbReference type="GO" id="GO:0005886">
    <property type="term" value="C:plasma membrane"/>
    <property type="evidence" value="ECO:0007669"/>
    <property type="project" value="UniProtKB-SubCell"/>
</dbReference>
<dbReference type="GO" id="GO:0042802">
    <property type="term" value="F:identical protein binding"/>
    <property type="evidence" value="ECO:0007669"/>
    <property type="project" value="Ensembl"/>
</dbReference>
<dbReference type="GO" id="GO:0045087">
    <property type="term" value="P:innate immune response"/>
    <property type="evidence" value="ECO:0007669"/>
    <property type="project" value="UniProtKB-KW"/>
</dbReference>
<dbReference type="GO" id="GO:0006629">
    <property type="term" value="P:lipid metabolic process"/>
    <property type="evidence" value="ECO:0007669"/>
    <property type="project" value="TreeGrafter"/>
</dbReference>
<dbReference type="GO" id="GO:0071763">
    <property type="term" value="P:nuclear membrane organization"/>
    <property type="evidence" value="ECO:0007669"/>
    <property type="project" value="Ensembl"/>
</dbReference>
<dbReference type="InterPro" id="IPR012430">
    <property type="entry name" value="TMEM43_fam"/>
</dbReference>
<dbReference type="PANTHER" id="PTHR13416">
    <property type="match status" value="1"/>
</dbReference>
<dbReference type="PANTHER" id="PTHR13416:SF2">
    <property type="entry name" value="TRANSMEMBRANE PROTEIN 43"/>
    <property type="match status" value="1"/>
</dbReference>
<dbReference type="Pfam" id="PF07787">
    <property type="entry name" value="TMEM43"/>
    <property type="match status" value="1"/>
</dbReference>
<keyword id="KW-0007">Acetylation</keyword>
<keyword id="KW-1003">Cell membrane</keyword>
<keyword id="KW-0256">Endoplasmic reticulum</keyword>
<keyword id="KW-0391">Immunity</keyword>
<keyword id="KW-0399">Innate immunity</keyword>
<keyword id="KW-0472">Membrane</keyword>
<keyword id="KW-0539">Nucleus</keyword>
<keyword id="KW-1185">Reference proteome</keyword>
<keyword id="KW-0812">Transmembrane</keyword>
<keyword id="KW-1133">Transmembrane helix</keyword>
<name>TMM43_PONAB</name>
<sequence>MAANYSSTSTRREHVKVKTGSQPGFLERLSETWGGMFVGLMAFLLSFYLIFTNEGRALKTATSLAEGLSLVVSPDSIHSVAPENEGRLVHIIGALRTSKLLSDPNYGVHLPAVKLRRHVEMYQWVETEESREYTEDEQVKKETRYSYNTEWRSEIINSKNFDREIGHKNPSAMAVESFTATAPFVQIGRFFLSSGLIDKVDNFKSLSLSKLEDPHVDIIRRGDFFYHSENPKYPEVGDLRVSFSYAGLSGDDPDLGPAHVVTVIARQRGDQLVPFSTKSGDTLLLLHHGDFSAEEVFHRELRSNSMKTWGLRAAGWMAMFMGLNLMTRILYTLVDWFPVFRDLVNIGLKAFAFCVATSLTLLTVAAGWLFYRPLWALLIAGLALVPIIVARTRVPAKKLE</sequence>
<accession>Q5R9S8</accession>
<protein>
    <recommendedName>
        <fullName>Transmembrane protein 43</fullName>
    </recommendedName>
    <alternativeName>
        <fullName>Protein LUMA</fullName>
    </alternativeName>
</protein>